<gene>
    <name type="primary">Hist1h2bp</name>
</gene>
<organism>
    <name type="scientific">Mus musculus</name>
    <name type="common">Mouse</name>
    <dbReference type="NCBI Taxonomy" id="10090"/>
    <lineage>
        <taxon>Eukaryota</taxon>
        <taxon>Metazoa</taxon>
        <taxon>Chordata</taxon>
        <taxon>Craniata</taxon>
        <taxon>Vertebrata</taxon>
        <taxon>Euteleostomi</taxon>
        <taxon>Mammalia</taxon>
        <taxon>Eutheria</taxon>
        <taxon>Euarchontoglires</taxon>
        <taxon>Glires</taxon>
        <taxon>Rodentia</taxon>
        <taxon>Myomorpha</taxon>
        <taxon>Muroidea</taxon>
        <taxon>Muridae</taxon>
        <taxon>Murinae</taxon>
        <taxon>Mus</taxon>
        <taxon>Mus</taxon>
    </lineage>
</organism>
<proteinExistence type="evidence at protein level"/>
<name>H2B1P_MOUSE</name>
<protein>
    <recommendedName>
        <fullName>Histone H2B type 1-P</fullName>
    </recommendedName>
</protein>
<comment type="function">
    <text>Core component of nucleosome. Nucleosomes wrap and compact DNA into chromatin, limiting DNA accessibility to the cellular machineries which require DNA as a template. Histones thereby play a central role in transcription regulation, DNA repair, DNA replication and chromosomal stability. DNA accessibility is regulated via a complex set of post-translational modifications of histones, also called histone code, and nucleosome remodeling.</text>
</comment>
<comment type="subunit">
    <text>The nucleosome is a histone octamer containing two molecules each of H2A, H2B, H3 and H4 assembled in one H3-H4 heterotetramer and two H2A-H2B heterodimers. The octamer wraps approximately 147 bp of DNA.</text>
</comment>
<comment type="subcellular location">
    <subcellularLocation>
        <location>Nucleus</location>
    </subcellularLocation>
    <subcellularLocation>
        <location>Chromosome</location>
    </subcellularLocation>
</comment>
<comment type="alternative products">
    <event type="alternative splicing"/>
    <isoform>
        <id>Q8CGP2-1</id>
        <name>1</name>
        <sequence type="displayed"/>
    </isoform>
    <isoform>
        <id>Q8CGP2-2</id>
        <name>2</name>
        <sequence type="described" ref="VSP_019618"/>
    </isoform>
</comment>
<comment type="PTM">
    <text evidence="2">Monoubiquitination at Lys-35 (H2BK34Ub) by the MSL1/MSL2 dimer is required for histone H3 'Lys-4' (H3K4me) and 'Lys-79' (H3K79me) methylation and transcription activation at specific gene loci, such as HOXA9 and MEIS1 loci. Similarly, monoubiquitination at Lys-121 (H2BK120Ub) by the RNF20/40 complex gives a specific tag for epigenetic transcriptional activation and is also prerequisite for histone H3 'Lys-4' and 'Lys-79' methylation. It also functions cooperatively with the FACT dimer to stimulate elongation by RNA polymerase II. H2BK120Ub also acts as a regulator of mRNA splicing: deubiquitination by USP49 is required for efficient cotranscriptional splicing of a large set of exons (By similarity).</text>
</comment>
<comment type="PTM">
    <text evidence="10 11 12 18">Phosphorylated on Ser-15 (H2BS14ph) by STK4/MST1 during apoptosis; which facilitates apoptotic chromatin condensation (PubMed:15197225, PubMed:16039583). Also phosphorylated on Ser-15 in response to DNA double strand breaks (DSBs), and in correlation with somatic hypermutation and immunoglobulin class-switch recombination (PubMed:15197225). Phosphorylation at Ser-37 (H2BS36ph) by AMPK in response to stress promotes transcription (PubMed:20647423, PubMed:32822587).</text>
</comment>
<comment type="PTM">
    <text evidence="4">GlcNAcylation at Ser-113 promotes monoubiquitination of Lys-121. It fluctuates in response to extracellular glucose, and associates with transcribed genes (By similarity).</text>
</comment>
<comment type="PTM">
    <text evidence="2 18">ADP-ribosylated by PARP1 or PARP2 on Ser-7 (H2BS6ADPr) in response to DNA damage (By similarity). H2BS6ADPr promotes recruitment of CHD1L (By similarity). Mono-ADP-ribosylated on Glu-3 (H2BE2ADPr) by PARP3 in response to single-strand breaks (By similarity). Poly ADP-ribosylation on Glu-36 (H2BE35ADPr) by PARP1 regulates adipogenesis: it inhibits phosphorylation at Ser-37 (H2BS36ph), thereby blocking expression of pro-adipogenetic genes (PubMed:32822587).</text>
</comment>
<comment type="PTM">
    <text evidence="13">Crotonylation (Kcr) is specifically present in male germ cells and marks testis-specific genes in post-meiotic cells, including X-linked genes that escape sex chromosome inactivation in haploid cells. Crotonylation marks active promoters and enhancers and confers resistance to transcriptional repressors. It is also associated with post-meiotically activated genes on autosomes.</text>
</comment>
<comment type="PTM">
    <text evidence="16">Hydroxybutyrylation of histones is induced by starvation.</text>
</comment>
<comment type="PTM">
    <text evidence="2">Lactylated in macrophages by EP300/P300 by using lactoyl-CoA directly derived from endogenous or exogenous lactate, leading to stimulates gene transcription.</text>
</comment>
<comment type="miscellaneous">
    <text>The human orthologous protein seems not to exist.</text>
</comment>
<comment type="similarity">
    <text evidence="21">Belongs to the histone H2B family.</text>
</comment>
<keyword id="KW-0007">Acetylation</keyword>
<keyword id="KW-0013">ADP-ribosylation</keyword>
<keyword id="KW-0025">Alternative splicing</keyword>
<keyword id="KW-0158">Chromosome</keyword>
<keyword id="KW-0238">DNA-binding</keyword>
<keyword id="KW-0325">Glycoprotein</keyword>
<keyword id="KW-0379">Hydroxylation</keyword>
<keyword id="KW-1017">Isopeptide bond</keyword>
<keyword id="KW-0488">Methylation</keyword>
<keyword id="KW-0544">Nucleosome core</keyword>
<keyword id="KW-0539">Nucleus</keyword>
<keyword id="KW-0597">Phosphoprotein</keyword>
<keyword id="KW-1185">Reference proteome</keyword>
<keyword id="KW-0832">Ubl conjugation</keyword>
<feature type="initiator methionine" description="Removed" evidence="1">
    <location>
        <position position="1"/>
    </location>
</feature>
<feature type="chain" id="PRO_0000244834" description="Histone H2B type 1-P">
    <location>
        <begin position="2"/>
        <end position="126"/>
    </location>
</feature>
<feature type="region of interest" description="Disordered" evidence="9">
    <location>
        <begin position="1"/>
        <end position="36"/>
    </location>
</feature>
<feature type="modified residue" description="N-acetylproline" evidence="1">
    <location>
        <position position="2"/>
    </location>
</feature>
<feature type="modified residue" description="ADP-ribosyl glutamic acid" evidence="2">
    <location>
        <position position="3"/>
    </location>
</feature>
<feature type="modified residue" description="N6-(2-hydroxyisobutyryl)lysine; alternate" evidence="15">
    <location>
        <position position="6"/>
    </location>
</feature>
<feature type="modified residue" description="N6-(beta-hydroxybutyryl)lysine; alternate" evidence="16">
    <location>
        <position position="6"/>
    </location>
</feature>
<feature type="modified residue" description="N6-acetyllysine; alternate" evidence="2">
    <location>
        <position position="6"/>
    </location>
</feature>
<feature type="modified residue" description="N6-butyryllysine; alternate" evidence="2">
    <location>
        <position position="6"/>
    </location>
</feature>
<feature type="modified residue" description="N6-crotonyllysine; alternate" evidence="13">
    <location>
        <position position="6"/>
    </location>
</feature>
<feature type="modified residue" description="N6-lactoyllysine; alternate" evidence="17">
    <location>
        <position position="6"/>
    </location>
</feature>
<feature type="modified residue" description="ADP-ribosylserine" evidence="2">
    <location>
        <position position="7"/>
    </location>
</feature>
<feature type="modified residue" description="N6-(beta-hydroxybutyryl)lysine; alternate" evidence="16">
    <location>
        <position position="12"/>
    </location>
</feature>
<feature type="modified residue" description="N6-acetyllysine; alternate" evidence="4">
    <location>
        <position position="12"/>
    </location>
</feature>
<feature type="modified residue" description="N6-crotonyllysine; alternate" evidence="13">
    <location>
        <position position="12"/>
    </location>
</feature>
<feature type="modified residue" description="N6-lactoyllysine; alternate" evidence="17">
    <location>
        <position position="12"/>
    </location>
</feature>
<feature type="modified residue" description="N6-(2-hydroxyisobutyryl)lysine; alternate" evidence="15">
    <location>
        <position position="13"/>
    </location>
</feature>
<feature type="modified residue" description="N6-acetyllysine; alternate" evidence="2">
    <location>
        <position position="13"/>
    </location>
</feature>
<feature type="modified residue" description="N6-crotonyllysine; alternate" evidence="13">
    <location>
        <position position="13"/>
    </location>
</feature>
<feature type="modified residue" description="Phosphoserine; by STK4/MST1" evidence="10 11">
    <location>
        <position position="15"/>
    </location>
</feature>
<feature type="modified residue" description="N6-acetyllysine; alternate" evidence="2">
    <location>
        <position position="16"/>
    </location>
</feature>
<feature type="modified residue" description="N6-crotonyllysine; alternate" evidence="13">
    <location>
        <position position="16"/>
    </location>
</feature>
<feature type="modified residue" description="N6-lactoyllysine; alternate" evidence="17">
    <location>
        <position position="16"/>
    </location>
</feature>
<feature type="modified residue" description="N6-acetyllysine; alternate" evidence="2">
    <location>
        <position position="17"/>
    </location>
</feature>
<feature type="modified residue" description="N6-crotonyllysine; alternate" evidence="13">
    <location>
        <position position="17"/>
    </location>
</feature>
<feature type="modified residue" description="N6-glutaryllysine; alternate" evidence="2">
    <location>
        <position position="17"/>
    </location>
</feature>
<feature type="modified residue" description="N6-lactoyllysine; alternate" evidence="17">
    <location>
        <position position="17"/>
    </location>
</feature>
<feature type="modified residue" description="N6-(2-hydroxyisobutyryl)lysine; alternate" evidence="15">
    <location>
        <position position="21"/>
    </location>
</feature>
<feature type="modified residue" description="N6-(beta-hydroxybutyryl)lysine; alternate" evidence="16">
    <location>
        <position position="21"/>
    </location>
</feature>
<feature type="modified residue" description="N6-acetyllysine; alternate" evidence="2">
    <location>
        <position position="21"/>
    </location>
</feature>
<feature type="modified residue" description="N6-butyryllysine; alternate" evidence="2">
    <location>
        <position position="21"/>
    </location>
</feature>
<feature type="modified residue" description="N6-crotonyllysine; alternate" evidence="13">
    <location>
        <position position="21"/>
    </location>
</feature>
<feature type="modified residue" description="N6-lactoyllysine; alternate" evidence="17">
    <location>
        <position position="21"/>
    </location>
</feature>
<feature type="modified residue" description="N6-(2-hydroxyisobutyryl)lysine; alternate" evidence="15">
    <location>
        <position position="24"/>
    </location>
</feature>
<feature type="modified residue" description="N6-acetyllysine; alternate" evidence="2">
    <location>
        <position position="24"/>
    </location>
</feature>
<feature type="modified residue" description="N6-crotonyllysine; alternate" evidence="13">
    <location>
        <position position="24"/>
    </location>
</feature>
<feature type="modified residue" description="N6-lactoyllysine; alternate" evidence="2">
    <location>
        <position position="24"/>
    </location>
</feature>
<feature type="modified residue" description="N6-(2-hydroxyisobutyryl)lysine" evidence="15">
    <location>
        <position position="25"/>
    </location>
</feature>
<feature type="modified residue" description="N6-(2-hydroxyisobutyryl)lysine; alternate" evidence="15">
    <location>
        <position position="35"/>
    </location>
</feature>
<feature type="modified residue" description="N6-(beta-hydroxybutyryl)lysine; alternate" evidence="16">
    <location>
        <position position="35"/>
    </location>
</feature>
<feature type="modified residue" description="N6-crotonyllysine; alternate" evidence="13">
    <location>
        <position position="35"/>
    </location>
</feature>
<feature type="modified residue" description="N6-glutaryllysine; alternate" evidence="2">
    <location>
        <position position="35"/>
    </location>
</feature>
<feature type="modified residue" description="N6-succinyllysine; alternate" evidence="2">
    <location>
        <position position="35"/>
    </location>
</feature>
<feature type="modified residue" description="PolyADP-ribosyl glutamic acid" evidence="18">
    <location>
        <position position="36"/>
    </location>
</feature>
<feature type="modified residue" description="Phosphoserine; by AMPK" evidence="12 18">
    <location>
        <position position="37"/>
    </location>
</feature>
<feature type="modified residue" description="N6-(2-hydroxyisobutyryl)lysine; alternate" evidence="15">
    <location>
        <position position="44"/>
    </location>
</feature>
<feature type="modified residue" description="N6-glutaryllysine; alternate" evidence="2">
    <location>
        <position position="44"/>
    </location>
</feature>
<feature type="modified residue" description="N6-lactoyllysine; alternate" evidence="2">
    <location>
        <position position="44"/>
    </location>
</feature>
<feature type="modified residue" description="N6-(2-hydroxyisobutyryl)lysine; alternate" evidence="15">
    <location>
        <position position="47"/>
    </location>
</feature>
<feature type="modified residue" description="N6-glutaryllysine; alternate" evidence="2">
    <location>
        <position position="47"/>
    </location>
</feature>
<feature type="modified residue" description="N6-methyllysine; alternate" evidence="4">
    <location>
        <position position="47"/>
    </location>
</feature>
<feature type="modified residue" description="N6,N6-dimethyllysine; alternate" evidence="4">
    <location>
        <position position="58"/>
    </location>
</feature>
<feature type="modified residue" description="N6-(2-hydroxyisobutyryl)lysine; alternate" evidence="15">
    <location>
        <position position="58"/>
    </location>
</feature>
<feature type="modified residue" description="Dimethylated arginine" evidence="8">
    <location>
        <position position="80"/>
    </location>
</feature>
<feature type="modified residue" description="N6,N6,N6-trimethyllysine; alternate" evidence="8">
    <location>
        <position position="86"/>
    </location>
</feature>
<feature type="modified residue" description="N6-(2-hydroxyisobutyryl)lysine; alternate" evidence="15">
    <location>
        <position position="86"/>
    </location>
</feature>
<feature type="modified residue" description="N6-acetyllysine; alternate" evidence="8">
    <location>
        <position position="86"/>
    </location>
</feature>
<feature type="modified residue" description="N6-lactoyllysine; alternate" evidence="17">
    <location>
        <position position="86"/>
    </location>
</feature>
<feature type="modified residue" description="Omega-N-methylarginine" evidence="8">
    <location>
        <position position="87"/>
    </location>
</feature>
<feature type="modified residue" description="Omega-N-methylarginine" evidence="8">
    <location>
        <position position="93"/>
    </location>
</feature>
<feature type="modified residue" description="N6-(2-hydroxyisobutyryl)lysine; alternate" evidence="15">
    <location>
        <position position="109"/>
    </location>
</feature>
<feature type="modified residue" description="N6-(beta-hydroxybutyryl)lysine; alternate" evidence="16">
    <location>
        <position position="109"/>
    </location>
</feature>
<feature type="modified residue" description="N6-glutaryllysine; alternate" evidence="2">
    <location>
        <position position="109"/>
    </location>
</feature>
<feature type="modified residue" description="N6-lactoyllysine; alternate" evidence="17">
    <location>
        <position position="109"/>
    </location>
</feature>
<feature type="modified residue" description="N6-methyllysine; alternate" evidence="4">
    <location>
        <position position="109"/>
    </location>
</feature>
<feature type="modified residue" description="Phosphothreonine" evidence="6">
    <location>
        <position position="116"/>
    </location>
</feature>
<feature type="modified residue" description="N6-(2-hydroxyisobutyryl)lysine; alternate" evidence="15">
    <location>
        <position position="117"/>
    </location>
</feature>
<feature type="modified residue" description="N6-(beta-hydroxybutyryl)lysine; alternate" evidence="16">
    <location>
        <position position="117"/>
    </location>
</feature>
<feature type="modified residue" description="N6-glutaryllysine; alternate" evidence="2">
    <location>
        <position position="117"/>
    </location>
</feature>
<feature type="modified residue" description="N6-lactoyllysine; alternate" evidence="17">
    <location>
        <position position="117"/>
    </location>
</feature>
<feature type="modified residue" description="N6-methylated lysine; alternate" evidence="6">
    <location>
        <position position="117"/>
    </location>
</feature>
<feature type="modified residue" description="N6-succinyllysine; alternate" evidence="2">
    <location>
        <position position="117"/>
    </location>
</feature>
<feature type="modified residue" description="N6-(2-hydroxyisobutyryl)lysine; alternate" evidence="15">
    <location>
        <position position="121"/>
    </location>
</feature>
<feature type="modified residue" description="N6-glutaryllysine; alternate" evidence="2">
    <location>
        <position position="121"/>
    </location>
</feature>
<feature type="modified residue" description="N6-lactoyllysine; alternate" evidence="2">
    <location>
        <position position="121"/>
    </location>
</feature>
<feature type="modified residue" description="N6-succinyllysine; alternate" evidence="14">
    <location>
        <position position="121"/>
    </location>
</feature>
<feature type="glycosylation site" description="O-linked (GlcNAc) serine" evidence="4">
    <location>
        <position position="113"/>
    </location>
</feature>
<feature type="cross-link" description="Glycyl lysine isopeptide (Lys-Gly) (interchain with G-Cter in SUMO2); alternate" evidence="3">
    <location>
        <position position="6"/>
    </location>
</feature>
<feature type="cross-link" description="Glycyl lysine isopeptide (Lys-Gly) (interchain with G-Cter in SUMO2); alternate" evidence="7">
    <location>
        <position position="21"/>
    </location>
</feature>
<feature type="cross-link" description="Glycyl lysine isopeptide (Lys-Gly) (interchain with G-Cter in ubiquitin); alternate" evidence="2">
    <location>
        <position position="35"/>
    </location>
</feature>
<feature type="cross-link" description="Glycyl lysine isopeptide (Lys-Gly) (interchain with G-Cter in ubiquitin); alternate" evidence="5">
    <location>
        <position position="121"/>
    </location>
</feature>
<feature type="splice variant" id="VSP_019618" description="In isoform 2." evidence="19 20">
    <original>K</original>
    <variation>KILWNKFYYLPSF</variation>
    <location>
        <position position="126"/>
    </location>
</feature>
<feature type="sequence conflict" description="In Ref. 3; AAA50377." evidence="21" ref="3">
    <original>K</original>
    <variation>R</variation>
    <location>
        <position position="6"/>
    </location>
</feature>
<feature type="sequence conflict" description="In Ref. 3; AAA50377." evidence="21" ref="3">
    <original>S</original>
    <variation>G</variation>
    <location>
        <position position="76"/>
    </location>
</feature>
<sequence>MPEPVKSVPAPKKGSKKAVTKAQKKDGKKRKRSRKESYSVYVYKVLKQVHPDTGISSKAMGIMNSFVNDIFERIASEASRLAHYNKRSTITSREIQTAVRLLLPGELAKHAVSEGTKAVTKYTSSK</sequence>
<accession>Q8CGP2</accession>
<accession>Q64477</accession>
<accession>Q6P8V8</accession>
<evidence type="ECO:0000250" key="1">
    <source>
        <dbReference type="UniProtKB" id="P23527"/>
    </source>
</evidence>
<evidence type="ECO:0000250" key="2">
    <source>
        <dbReference type="UniProtKB" id="P33778"/>
    </source>
</evidence>
<evidence type="ECO:0000250" key="3">
    <source>
        <dbReference type="UniProtKB" id="P58876"/>
    </source>
</evidence>
<evidence type="ECO:0000250" key="4">
    <source>
        <dbReference type="UniProtKB" id="P62807"/>
    </source>
</evidence>
<evidence type="ECO:0000250" key="5">
    <source>
        <dbReference type="UniProtKB" id="P62808"/>
    </source>
</evidence>
<evidence type="ECO:0000250" key="6">
    <source>
        <dbReference type="UniProtKB" id="Q00729"/>
    </source>
</evidence>
<evidence type="ECO:0000250" key="7">
    <source>
        <dbReference type="UniProtKB" id="Q5QNW6"/>
    </source>
</evidence>
<evidence type="ECO:0000250" key="8">
    <source>
        <dbReference type="UniProtKB" id="Q96A08"/>
    </source>
</evidence>
<evidence type="ECO:0000256" key="9">
    <source>
        <dbReference type="SAM" id="MobiDB-lite"/>
    </source>
</evidence>
<evidence type="ECO:0000269" key="10">
    <source>
    </source>
</evidence>
<evidence type="ECO:0000269" key="11">
    <source>
    </source>
</evidence>
<evidence type="ECO:0000269" key="12">
    <source>
    </source>
</evidence>
<evidence type="ECO:0000269" key="13">
    <source>
    </source>
</evidence>
<evidence type="ECO:0000269" key="14">
    <source>
    </source>
</evidence>
<evidence type="ECO:0000269" key="15">
    <source>
    </source>
</evidence>
<evidence type="ECO:0000269" key="16">
    <source>
    </source>
</evidence>
<evidence type="ECO:0000269" key="17">
    <source>
    </source>
</evidence>
<evidence type="ECO:0000269" key="18">
    <source>
    </source>
</evidence>
<evidence type="ECO:0000303" key="19">
    <source>
    </source>
</evidence>
<evidence type="ECO:0000303" key="20">
    <source>
    </source>
</evidence>
<evidence type="ECO:0000305" key="21"/>
<reference key="1">
    <citation type="journal article" date="2002" name="Genomics">
        <title>The human and mouse replication-dependent histone genes.</title>
        <authorList>
            <person name="Marzluff W.F."/>
            <person name="Gongidi P."/>
            <person name="Woods K.R."/>
            <person name="Jin J."/>
            <person name="Maltais L.J."/>
        </authorList>
    </citation>
    <scope>NUCLEOTIDE SEQUENCE [GENOMIC DNA]</scope>
    <scope>ALTERNATIVE SPLICING (ISOFORM 1)</scope>
</reference>
<reference key="2">
    <citation type="journal article" date="2009" name="PLoS Biol.">
        <title>Lineage-specific biology revealed by a finished genome assembly of the mouse.</title>
        <authorList>
            <person name="Church D.M."/>
            <person name="Goodstadt L."/>
            <person name="Hillier L.W."/>
            <person name="Zody M.C."/>
            <person name="Goldstein S."/>
            <person name="She X."/>
            <person name="Bult C.J."/>
            <person name="Agarwala R."/>
            <person name="Cherry J.L."/>
            <person name="DiCuccio M."/>
            <person name="Hlavina W."/>
            <person name="Kapustin Y."/>
            <person name="Meric P."/>
            <person name="Maglott D."/>
            <person name="Birtle Z."/>
            <person name="Marques A.C."/>
            <person name="Graves T."/>
            <person name="Zhou S."/>
            <person name="Teague B."/>
            <person name="Potamousis K."/>
            <person name="Churas C."/>
            <person name="Place M."/>
            <person name="Herschleb J."/>
            <person name="Runnheim R."/>
            <person name="Forrest D."/>
            <person name="Amos-Landgraf J."/>
            <person name="Schwartz D.C."/>
            <person name="Cheng Z."/>
            <person name="Lindblad-Toh K."/>
            <person name="Eichler E.E."/>
            <person name="Ponting C.P."/>
        </authorList>
    </citation>
    <scope>NUCLEOTIDE SEQUENCE [LARGE SCALE GENOMIC DNA]</scope>
    <source>
        <strain>C57BL/6J</strain>
    </source>
</reference>
<reference key="3">
    <citation type="journal article" date="2004" name="Genome Res.">
        <title>The status, quality, and expansion of the NIH full-length cDNA project: the Mammalian Gene Collection (MGC).</title>
        <authorList>
            <consortium name="The MGC Project Team"/>
        </authorList>
    </citation>
    <scope>NUCLEOTIDE SEQUENCE [LARGE SCALE MRNA] (ISOFORM 2)</scope>
    <source>
        <tissue>Testis</tissue>
    </source>
</reference>
<reference key="4">
    <citation type="journal article" date="1989" name="Dev. Biol.">
        <title>Expression of a novel histone 2B during mouse spermiogenesis.</title>
        <authorList>
            <person name="Moss S.B."/>
            <person name="Challoner P.B."/>
            <person name="Groudine M."/>
        </authorList>
    </citation>
    <scope>NUCLEOTIDE SEQUENCE [MRNA] OF 5-126 (ISOFORM 2)</scope>
    <source>
        <strain>Swiss Webster</strain>
        <tissue>Testis</tissue>
    </source>
</reference>
<reference key="5">
    <citation type="journal article" date="2004" name="J. Exp. Med.">
        <title>Phosphorylation of histone H2B at DNA double-strand breaks.</title>
        <authorList>
            <person name="Fernandez-Capetillo O."/>
            <person name="Allis C.D."/>
            <person name="Nussenzweig A."/>
        </authorList>
    </citation>
    <scope>PHOSPHORYLATION AT SER-15</scope>
</reference>
<reference key="6">
    <citation type="journal article" date="2005" name="Immunity">
        <title>Histone modifications associated with somatic hypermutation.</title>
        <authorList>
            <person name="Odegard V.H."/>
            <person name="Kim S.T."/>
            <person name="Anderson S.M."/>
            <person name="Shlomchik M.J."/>
            <person name="Schatz D.G."/>
        </authorList>
    </citation>
    <scope>PHOSPHORYLATION AT SER-15</scope>
</reference>
<reference key="7">
    <citation type="journal article" date="2010" name="Science">
        <title>Signaling kinase AMPK activates stress-promoted transcription via histone H2B phosphorylation.</title>
        <authorList>
            <person name="Bungard D."/>
            <person name="Fuerth B.J."/>
            <person name="Zeng P.Y."/>
            <person name="Faubert B."/>
            <person name="Maas N.L."/>
            <person name="Viollet B."/>
            <person name="Carling D."/>
            <person name="Thompson C.B."/>
            <person name="Jones R.G."/>
            <person name="Berger S.L."/>
        </authorList>
    </citation>
    <scope>PHOSPHORYLATION AT SER-37</scope>
</reference>
<reference key="8">
    <citation type="journal article" date="2011" name="Cell">
        <title>Identification of 67 histone marks and histone lysine crotonylation as a new type of histone modification.</title>
        <authorList>
            <person name="Tan M."/>
            <person name="Luo H."/>
            <person name="Lee S."/>
            <person name="Jin F."/>
            <person name="Yang J.S."/>
            <person name="Montellier E."/>
            <person name="Buchou T."/>
            <person name="Cheng Z."/>
            <person name="Rousseaux S."/>
            <person name="Rajagopal N."/>
            <person name="Lu Z."/>
            <person name="Ye Z."/>
            <person name="Zhu Q."/>
            <person name="Wysocka J."/>
            <person name="Ye Y."/>
            <person name="Khochbin S."/>
            <person name="Ren B."/>
            <person name="Zhao Y."/>
        </authorList>
    </citation>
    <scope>CROTONYLATION AT LYS-6; LYS-12; LYS-13; LYS-16; LYS-17; LYS-21; LYS-24 AND LYS-35</scope>
</reference>
<reference key="9">
    <citation type="journal article" date="2012" name="Mol. Cell. Proteomics">
        <title>Lysine succinylation and lysine malonylation in histones.</title>
        <authorList>
            <person name="Xie Z."/>
            <person name="Dai J."/>
            <person name="Dai L."/>
            <person name="Tan M."/>
            <person name="Cheng Z."/>
            <person name="Wu Y."/>
            <person name="Boeke J.D."/>
            <person name="Zhao Y."/>
        </authorList>
    </citation>
    <scope>SUCCINYLATION AT LYS-121</scope>
</reference>
<reference key="10">
    <citation type="journal article" date="2014" name="Nat. Chem. Biol.">
        <title>Lysine 2-hydroxyisobutyrylation is a widely distributed active histone mark.</title>
        <authorList>
            <person name="Dai L."/>
            <person name="Peng C."/>
            <person name="Montellier E."/>
            <person name="Lu Z."/>
            <person name="Chen Y."/>
            <person name="Ishii H."/>
            <person name="Debernardi A."/>
            <person name="Buchou T."/>
            <person name="Rousseaux S."/>
            <person name="Jin F."/>
            <person name="Sabari B.R."/>
            <person name="Deng Z."/>
            <person name="Allis C.D."/>
            <person name="Ren B."/>
            <person name="Khochbin S."/>
            <person name="Zhao Y."/>
        </authorList>
    </citation>
    <scope>HYDROXYBUTYRYLATION AT LYS-6; LYS-13; LYS-21; LYS-24; LYS-25; LYS-35; LYS-44; LYS-47; LYS-58; LYS-86; LYS-109; LYS-117 AND LYS-121</scope>
</reference>
<reference key="11">
    <citation type="journal article" date="2016" name="Mol. Cell">
        <title>Metabolic regulation of gene expression by histone lysine beta-hydroxybutyrylation.</title>
        <authorList>
            <person name="Xie Z."/>
            <person name="Zhang D."/>
            <person name="Chung D."/>
            <person name="Tang Z."/>
            <person name="Huang H."/>
            <person name="Dai L."/>
            <person name="Qi S."/>
            <person name="Li J."/>
            <person name="Colak G."/>
            <person name="Chen Y."/>
            <person name="Xia C."/>
            <person name="Peng C."/>
            <person name="Ruan H."/>
            <person name="Kirkey M."/>
            <person name="Wang D."/>
            <person name="Jensen L.M."/>
            <person name="Kwon O.K."/>
            <person name="Lee S."/>
            <person name="Pletcher S.D."/>
            <person name="Tan M."/>
            <person name="Lombard D.B."/>
            <person name="White K.P."/>
            <person name="Zhao H."/>
            <person name="Li J."/>
            <person name="Roeder R.G."/>
            <person name="Yang X."/>
            <person name="Zhao Y."/>
        </authorList>
    </citation>
    <scope>HYDROXYBUTYRYLATION AT LYS-6; LYS-12; LYS-21; LYS-35; LYS-109 AND LYS-117</scope>
</reference>
<reference key="12">
    <citation type="journal article" date="2019" name="Nature">
        <title>Metabolic regulation of gene expression by histone lactylation.</title>
        <authorList>
            <person name="Zhang D."/>
            <person name="Tang Z."/>
            <person name="Huang H."/>
            <person name="Zhou G."/>
            <person name="Cui C."/>
            <person name="Weng Y."/>
            <person name="Liu W."/>
            <person name="Kim S."/>
            <person name="Lee S."/>
            <person name="Perez-Neut M."/>
            <person name="Ding J."/>
            <person name="Czyz D."/>
            <person name="Hu R."/>
            <person name="Ye Z."/>
            <person name="He M."/>
            <person name="Zheng Y.G."/>
            <person name="Shuman H.A."/>
            <person name="Dai L."/>
            <person name="Ren B."/>
            <person name="Roeder R.G."/>
            <person name="Becker L."/>
            <person name="Zhao Y."/>
        </authorList>
    </citation>
    <scope>LACTYLATION AT LYS-6; LYS-12; LYS-16; LYS-17; LYS-21; LYS-86; LYS-109 AND LYS-117</scope>
</reference>
<reference key="13">
    <citation type="journal article" date="2020" name="Mol. Cell">
        <title>Functional interplay between histone H2B ADP-ribosylation and phosphorylation controls adipogenesis.</title>
        <authorList>
            <person name="Huang D."/>
            <person name="Camacho C.V."/>
            <person name="Setlem R."/>
            <person name="Ryu K.W."/>
            <person name="Parameswaran B."/>
            <person name="Gupta R.K."/>
            <person name="Kraus W.L."/>
        </authorList>
    </citation>
    <scope>ADP-RIBOSYLATION AT GLU-36</scope>
    <scope>PHOSPHORYLATION AT SER-37</scope>
</reference>
<dbReference type="EMBL" id="AY158930">
    <property type="protein sequence ID" value="AAO06240.1"/>
    <property type="molecule type" value="Genomic_DNA"/>
</dbReference>
<dbReference type="EMBL" id="AL589651">
    <property type="status" value="NOT_ANNOTATED_CDS"/>
    <property type="molecule type" value="Genomic_DNA"/>
</dbReference>
<dbReference type="EMBL" id="BC061044">
    <property type="protein sequence ID" value="AAH61044.1"/>
    <property type="molecule type" value="mRNA"/>
</dbReference>
<dbReference type="EMBL" id="M25487">
    <property type="protein sequence ID" value="AAA50377.1"/>
    <property type="molecule type" value="mRNA"/>
</dbReference>
<dbReference type="CCDS" id="CCDS26298.2">
    <molecule id="Q8CGP2-2"/>
</dbReference>
<dbReference type="CCDS" id="CCDS79168.1">
    <molecule id="Q8CGP2-1"/>
</dbReference>
<dbReference type="PIR" id="A37363">
    <property type="entry name" value="A37363"/>
</dbReference>
<dbReference type="RefSeq" id="NP_001277395.1">
    <molecule id="Q8CGP2-1"/>
    <property type="nucleotide sequence ID" value="NM_001290466.1"/>
</dbReference>
<dbReference type="RefSeq" id="NP_835509.2">
    <molecule id="Q8CGP2-2"/>
    <property type="nucleotide sequence ID" value="NM_178202.2"/>
</dbReference>
<dbReference type="RefSeq" id="XP_006516753.1">
    <molecule id="Q8CGP2-1"/>
    <property type="nucleotide sequence ID" value="XM_006516690.2"/>
</dbReference>
<dbReference type="SMR" id="Q8CGP2"/>
<dbReference type="BioGRID" id="235107">
    <property type="interactions" value="5"/>
</dbReference>
<dbReference type="FunCoup" id="Q8CGP2">
    <property type="interactions" value="1653"/>
</dbReference>
<dbReference type="IntAct" id="Q8CGP2">
    <property type="interactions" value="2"/>
</dbReference>
<dbReference type="STRING" id="10090.ENSMUSP00000106099"/>
<dbReference type="GlyGen" id="Q8CGP2">
    <property type="glycosylation" value="2 sites, 1 O-linked glycan (1 site)"/>
</dbReference>
<dbReference type="iPTMnet" id="Q8CGP2"/>
<dbReference type="PhosphoSitePlus" id="Q8CGP2"/>
<dbReference type="SwissPalm" id="Q8CGP2"/>
<dbReference type="jPOST" id="Q8CGP2"/>
<dbReference type="PaxDb" id="10090-ENSMUSP00000106099"/>
<dbReference type="ProteomicsDB" id="271123">
    <molecule id="Q8CGP2-1"/>
</dbReference>
<dbReference type="ProteomicsDB" id="271124">
    <molecule id="Q8CGP2-2"/>
</dbReference>
<dbReference type="Pumba" id="Q8CGP2"/>
<dbReference type="TopDownProteomics" id="Q8CGP2-2">
    <molecule id="Q8CGP2-2"/>
</dbReference>
<dbReference type="DNASU" id="319188"/>
<dbReference type="Ensembl" id="ENSMUST00000102982.2">
    <molecule id="Q8CGP2-1"/>
    <property type="protein sequence ID" value="ENSMUSP00000100047.2"/>
    <property type="gene ID" value="ENSMUSG00000069308.8"/>
</dbReference>
<dbReference type="Ensembl" id="ENSMUST00000110473.3">
    <molecule id="Q8CGP2-2"/>
    <property type="protein sequence ID" value="ENSMUSP00000106099.3"/>
    <property type="gene ID" value="ENSMUSG00000069308.8"/>
</dbReference>
<dbReference type="GeneID" id="319188"/>
<dbReference type="KEGG" id="mmu:319188"/>
<dbReference type="UCSC" id="uc007prm.2">
    <molecule id="Q8CGP2-2"/>
    <property type="organism name" value="mouse"/>
</dbReference>
<dbReference type="UCSC" id="uc056ytc.1">
    <molecule id="Q8CGP2-1"/>
    <property type="organism name" value="mouse"/>
</dbReference>
<dbReference type="AGR" id="MGI:2448409"/>
<dbReference type="CTD" id="319188"/>
<dbReference type="MGI" id="MGI:2448409">
    <property type="gene designation" value="Hist1h2bp"/>
</dbReference>
<dbReference type="VEuPathDB" id="HostDB:ENSMUSG00000069308"/>
<dbReference type="eggNOG" id="KOG1744">
    <property type="taxonomic scope" value="Eukaryota"/>
</dbReference>
<dbReference type="GeneTree" id="ENSGT01110000267152"/>
<dbReference type="HOGENOM" id="CLU_075666_2_1_1"/>
<dbReference type="InParanoid" id="Q8CGP2"/>
<dbReference type="OMA" id="WLIYENS"/>
<dbReference type="OrthoDB" id="9620091at2759"/>
<dbReference type="PhylomeDB" id="Q8CGP2"/>
<dbReference type="TreeFam" id="TF300212"/>
<dbReference type="Reactome" id="R-MMU-110330">
    <property type="pathway name" value="Recognition and association of DNA glycosylase with site containing an affected purine"/>
</dbReference>
<dbReference type="Reactome" id="R-MMU-110331">
    <property type="pathway name" value="Cleavage of the damaged purine"/>
</dbReference>
<dbReference type="Reactome" id="R-MMU-212300">
    <property type="pathway name" value="PRC2 methylates histones and DNA"/>
</dbReference>
<dbReference type="Reactome" id="R-MMU-2299718">
    <property type="pathway name" value="Condensation of Prophase Chromosomes"/>
</dbReference>
<dbReference type="Reactome" id="R-MMU-2559586">
    <property type="pathway name" value="DNA Damage/Telomere Stress Induced Senescence"/>
</dbReference>
<dbReference type="Reactome" id="R-MMU-3214815">
    <property type="pathway name" value="HDACs deacetylate histones"/>
</dbReference>
<dbReference type="Reactome" id="R-MMU-3214847">
    <property type="pathway name" value="HATs acetylate histones"/>
</dbReference>
<dbReference type="Reactome" id="R-MMU-5693565">
    <property type="pathway name" value="Recruitment and ATM-mediated phosphorylation of repair and signaling proteins at DNA double strand breaks"/>
</dbReference>
<dbReference type="Reactome" id="R-MMU-5693571">
    <property type="pathway name" value="Nonhomologous End-Joining (NHEJ)"/>
</dbReference>
<dbReference type="Reactome" id="R-MMU-5693607">
    <property type="pathway name" value="Processing of DNA double-strand break ends"/>
</dbReference>
<dbReference type="Reactome" id="R-MMU-606279">
    <property type="pathway name" value="Deposition of new CENPA-containing nucleosomes at the centromere"/>
</dbReference>
<dbReference type="Reactome" id="R-MMU-69473">
    <property type="pathway name" value="G2/M DNA damage checkpoint"/>
</dbReference>
<dbReference type="Reactome" id="R-MMU-8866654">
    <property type="pathway name" value="E3 ubiquitin ligases ubiquitinate target proteins"/>
</dbReference>
<dbReference type="Reactome" id="R-MMU-8936459">
    <property type="pathway name" value="RUNX1 regulates genes involved in megakaryocyte differentiation and platelet function"/>
</dbReference>
<dbReference type="Reactome" id="R-MMU-9018519">
    <property type="pathway name" value="Estrogen-dependent gene expression"/>
</dbReference>
<dbReference type="Reactome" id="R-MMU-9670095">
    <property type="pathway name" value="Inhibition of DNA recombination at telomere"/>
</dbReference>
<dbReference type="Reactome" id="R-MMU-9841922">
    <property type="pathway name" value="MLL4 and MLL3 complexes regulate expression of PPARG target genes in adipogenesis and hepatic steatosis"/>
</dbReference>
<dbReference type="Reactome" id="R-MMU-9843940">
    <property type="pathway name" value="Regulation of endogenous retroelements by KRAB-ZFP proteins"/>
</dbReference>
<dbReference type="BioGRID-ORCS" id="319188">
    <property type="hits" value="9 hits in 40 CRISPR screens"/>
</dbReference>
<dbReference type="ChiTaRS" id="Hist1h2bp">
    <property type="organism name" value="mouse"/>
</dbReference>
<dbReference type="PRO" id="PR:Q8CGP2"/>
<dbReference type="Proteomes" id="UP000000589">
    <property type="component" value="Chromosome 13"/>
</dbReference>
<dbReference type="RNAct" id="Q8CGP2">
    <property type="molecule type" value="protein"/>
</dbReference>
<dbReference type="Bgee" id="ENSMUSG00000069308">
    <property type="expression patterns" value="Expressed in spermatid and 57 other cell types or tissues"/>
</dbReference>
<dbReference type="GO" id="GO:0005654">
    <property type="term" value="C:nucleoplasm"/>
    <property type="evidence" value="ECO:0000304"/>
    <property type="project" value="Reactome"/>
</dbReference>
<dbReference type="GO" id="GO:0000786">
    <property type="term" value="C:nucleosome"/>
    <property type="evidence" value="ECO:0007669"/>
    <property type="project" value="UniProtKB-KW"/>
</dbReference>
<dbReference type="GO" id="GO:0003677">
    <property type="term" value="F:DNA binding"/>
    <property type="evidence" value="ECO:0007669"/>
    <property type="project" value="UniProtKB-KW"/>
</dbReference>
<dbReference type="GO" id="GO:0046982">
    <property type="term" value="F:protein heterodimerization activity"/>
    <property type="evidence" value="ECO:0007669"/>
    <property type="project" value="InterPro"/>
</dbReference>
<dbReference type="GO" id="GO:0030527">
    <property type="term" value="F:structural constituent of chromatin"/>
    <property type="evidence" value="ECO:0007669"/>
    <property type="project" value="InterPro"/>
</dbReference>
<dbReference type="CDD" id="cd22910">
    <property type="entry name" value="HFD_H2B"/>
    <property type="match status" value="1"/>
</dbReference>
<dbReference type="FunFam" id="1.10.20.10:FF:000003">
    <property type="entry name" value="Histone H2B"/>
    <property type="match status" value="1"/>
</dbReference>
<dbReference type="Gene3D" id="1.10.20.10">
    <property type="entry name" value="Histone, subunit A"/>
    <property type="match status" value="1"/>
</dbReference>
<dbReference type="InterPro" id="IPR009072">
    <property type="entry name" value="Histone-fold"/>
</dbReference>
<dbReference type="InterPro" id="IPR007125">
    <property type="entry name" value="Histone_H2A/H2B/H3"/>
</dbReference>
<dbReference type="InterPro" id="IPR000558">
    <property type="entry name" value="Histone_H2B"/>
</dbReference>
<dbReference type="InterPro" id="IPR055333">
    <property type="entry name" value="HISTONE_H2B_site"/>
</dbReference>
<dbReference type="PANTHER" id="PTHR23428">
    <property type="entry name" value="HISTONE H2B"/>
    <property type="match status" value="1"/>
</dbReference>
<dbReference type="Pfam" id="PF00125">
    <property type="entry name" value="Histone"/>
    <property type="match status" value="1"/>
</dbReference>
<dbReference type="PRINTS" id="PR00621">
    <property type="entry name" value="HISTONEH2B"/>
</dbReference>
<dbReference type="SMART" id="SM00427">
    <property type="entry name" value="H2B"/>
    <property type="match status" value="1"/>
</dbReference>
<dbReference type="SUPFAM" id="SSF47113">
    <property type="entry name" value="Histone-fold"/>
    <property type="match status" value="1"/>
</dbReference>
<dbReference type="PROSITE" id="PS00357">
    <property type="entry name" value="HISTONE_H2B"/>
    <property type="match status" value="1"/>
</dbReference>